<sequence>MQKARIRLSGISPKDLDGVCNQVKSIAERTGVNISGPVPLPTKKLVVPTRKSPSGDGTATWDHWEMRVHKRLIDIAADERALRQLMRIQVPKDINIEIVLEG</sequence>
<feature type="chain" id="PRO_0000146648" description="Small ribosomal subunit protein uS10">
    <location>
        <begin position="1"/>
        <end position="102"/>
    </location>
</feature>
<accession>P61930</accession>
<accession>Q8TRC5</accession>
<keyword id="KW-0687">Ribonucleoprotein</keyword>
<keyword id="KW-0689">Ribosomal protein</keyword>
<evidence type="ECO:0000255" key="1">
    <source>
        <dbReference type="HAMAP-Rule" id="MF_00508"/>
    </source>
</evidence>
<evidence type="ECO:0000305" key="2"/>
<reference key="1">
    <citation type="journal article" date="2002" name="J. Mol. Microbiol. Biotechnol.">
        <title>The genome of Methanosarcina mazei: evidence for lateral gene transfer between Bacteria and Archaea.</title>
        <authorList>
            <person name="Deppenmeier U."/>
            <person name="Johann A."/>
            <person name="Hartsch T."/>
            <person name="Merkl R."/>
            <person name="Schmitz R.A."/>
            <person name="Martinez-Arias R."/>
            <person name="Henne A."/>
            <person name="Wiezer A."/>
            <person name="Baeumer S."/>
            <person name="Jacobi C."/>
            <person name="Brueggemann H."/>
            <person name="Lienard T."/>
            <person name="Christmann A."/>
            <person name="Boemecke M."/>
            <person name="Steckel S."/>
            <person name="Bhattacharyya A."/>
            <person name="Lykidis A."/>
            <person name="Overbeek R."/>
            <person name="Klenk H.-P."/>
            <person name="Gunsalus R.P."/>
            <person name="Fritz H.-J."/>
            <person name="Gottschalk G."/>
        </authorList>
    </citation>
    <scope>NUCLEOTIDE SEQUENCE [LARGE SCALE GENOMIC DNA]</scope>
    <source>
        <strain>ATCC BAA-159 / DSM 3647 / Goe1 / Go1 / JCM 11833 / OCM 88</strain>
    </source>
</reference>
<dbReference type="EMBL" id="AE008384">
    <property type="protein sequence ID" value="AAM31959.1"/>
    <property type="molecule type" value="Genomic_DNA"/>
</dbReference>
<dbReference type="SMR" id="P61930"/>
<dbReference type="KEGG" id="mma:MM_2263"/>
<dbReference type="PATRIC" id="fig|192952.21.peg.2593"/>
<dbReference type="eggNOG" id="arCOG01758">
    <property type="taxonomic scope" value="Archaea"/>
</dbReference>
<dbReference type="HOGENOM" id="CLU_122625_0_1_2"/>
<dbReference type="Proteomes" id="UP000000595">
    <property type="component" value="Chromosome"/>
</dbReference>
<dbReference type="GO" id="GO:0015935">
    <property type="term" value="C:small ribosomal subunit"/>
    <property type="evidence" value="ECO:0007669"/>
    <property type="project" value="InterPro"/>
</dbReference>
<dbReference type="GO" id="GO:0003735">
    <property type="term" value="F:structural constituent of ribosome"/>
    <property type="evidence" value="ECO:0007669"/>
    <property type="project" value="InterPro"/>
</dbReference>
<dbReference type="GO" id="GO:0000049">
    <property type="term" value="F:tRNA binding"/>
    <property type="evidence" value="ECO:0007669"/>
    <property type="project" value="UniProtKB-UniRule"/>
</dbReference>
<dbReference type="GO" id="GO:0006412">
    <property type="term" value="P:translation"/>
    <property type="evidence" value="ECO:0007669"/>
    <property type="project" value="UniProtKB-UniRule"/>
</dbReference>
<dbReference type="FunFam" id="3.30.70.600:FF:000004">
    <property type="entry name" value="30S ribosomal protein S10"/>
    <property type="match status" value="1"/>
</dbReference>
<dbReference type="Gene3D" id="3.30.70.600">
    <property type="entry name" value="Ribosomal protein S10 domain"/>
    <property type="match status" value="1"/>
</dbReference>
<dbReference type="HAMAP" id="MF_00508">
    <property type="entry name" value="Ribosomal_uS10"/>
    <property type="match status" value="1"/>
</dbReference>
<dbReference type="InterPro" id="IPR001848">
    <property type="entry name" value="Ribosomal_uS10"/>
</dbReference>
<dbReference type="InterPro" id="IPR018268">
    <property type="entry name" value="Ribosomal_uS10_CS"/>
</dbReference>
<dbReference type="InterPro" id="IPR027486">
    <property type="entry name" value="Ribosomal_uS10_dom"/>
</dbReference>
<dbReference type="InterPro" id="IPR036838">
    <property type="entry name" value="Ribosomal_uS10_dom_sf"/>
</dbReference>
<dbReference type="InterPro" id="IPR005729">
    <property type="entry name" value="Ribosomal_uS10_euk/arc"/>
</dbReference>
<dbReference type="NCBIfam" id="TIGR01046">
    <property type="entry name" value="uS10_euk_arch"/>
    <property type="match status" value="1"/>
</dbReference>
<dbReference type="PANTHER" id="PTHR11700">
    <property type="entry name" value="30S RIBOSOMAL PROTEIN S10 FAMILY MEMBER"/>
    <property type="match status" value="1"/>
</dbReference>
<dbReference type="Pfam" id="PF00338">
    <property type="entry name" value="Ribosomal_S10"/>
    <property type="match status" value="1"/>
</dbReference>
<dbReference type="PRINTS" id="PR00971">
    <property type="entry name" value="RIBOSOMALS10"/>
</dbReference>
<dbReference type="SMART" id="SM01403">
    <property type="entry name" value="Ribosomal_S10"/>
    <property type="match status" value="1"/>
</dbReference>
<dbReference type="SUPFAM" id="SSF54999">
    <property type="entry name" value="Ribosomal protein S10"/>
    <property type="match status" value="1"/>
</dbReference>
<dbReference type="PROSITE" id="PS00361">
    <property type="entry name" value="RIBOSOMAL_S10"/>
    <property type="match status" value="1"/>
</dbReference>
<gene>
    <name evidence="1" type="primary">rps10</name>
    <name type="ordered locus">MM_2263</name>
</gene>
<protein>
    <recommendedName>
        <fullName evidence="1">Small ribosomal subunit protein uS10</fullName>
    </recommendedName>
    <alternativeName>
        <fullName evidence="2">30S ribosomal protein S10</fullName>
    </alternativeName>
</protein>
<comment type="function">
    <text evidence="1">Involved in the binding of tRNA to the ribosomes.</text>
</comment>
<comment type="subunit">
    <text evidence="1">Part of the 30S ribosomal subunit.</text>
</comment>
<comment type="similarity">
    <text evidence="1">Belongs to the universal ribosomal protein uS10 family.</text>
</comment>
<name>RS10_METMA</name>
<organism>
    <name type="scientific">Methanosarcina mazei (strain ATCC BAA-159 / DSM 3647 / Goe1 / Go1 / JCM 11833 / OCM 88)</name>
    <name type="common">Methanosarcina frisia</name>
    <dbReference type="NCBI Taxonomy" id="192952"/>
    <lineage>
        <taxon>Archaea</taxon>
        <taxon>Methanobacteriati</taxon>
        <taxon>Methanobacteriota</taxon>
        <taxon>Stenosarchaea group</taxon>
        <taxon>Methanomicrobia</taxon>
        <taxon>Methanosarcinales</taxon>
        <taxon>Methanosarcinaceae</taxon>
        <taxon>Methanosarcina</taxon>
    </lineage>
</organism>
<proteinExistence type="inferred from homology"/>